<accession>O22001</accession>
<feature type="chain" id="PRO_0000164757" description="Excisionase">
    <location>
        <begin position="1"/>
        <end position="56"/>
    </location>
</feature>
<gene>
    <name type="primary">XIS</name>
    <name type="synonym">34</name>
    <name type="synonym">G2</name>
</gene>
<protein>
    <recommendedName>
        <fullName evidence="1">Excisionase</fullName>
    </recommendedName>
    <alternativeName>
        <fullName>Gp36</fullName>
    </alternativeName>
</protein>
<reference key="1">
    <citation type="journal article" date="1997" name="Microbiology">
        <title>Mycobacteriophage D29 contains an integration system similar to that of the temperate mycobacteriophage L5.</title>
        <authorList>
            <person name="Ribeiro G."/>
            <person name="Viveiros M."/>
            <person name="David H.L."/>
            <person name="Costa J.V."/>
        </authorList>
    </citation>
    <scope>NUCLEOTIDE SEQUENCE [GENOMIC DNA]</scope>
</reference>
<reference key="2">
    <citation type="journal article" date="1998" name="J. Mol. Biol.">
        <title>Genome structure of mycobacteriophage D29: implications for phage evolution.</title>
        <authorList>
            <person name="Ford M.E."/>
            <person name="Sarkis G.J."/>
            <person name="Belanger A.E."/>
            <person name="Hendrix R.W."/>
            <person name="Hatfull G.F."/>
        </authorList>
    </citation>
    <scope>NUCLEOTIDE SEQUENCE [LARGE SCALE GENOMIC DNA]</scope>
</reference>
<name>VXIS_BPMD2</name>
<keyword id="KW-0233">DNA recombination</keyword>
<keyword id="KW-0238">DNA-binding</keyword>
<keyword id="KW-1185">Reference proteome</keyword>
<keyword id="KW-1250">Viral genome excision</keyword>
<organismHost>
    <name type="scientific">Mycobacterium</name>
    <dbReference type="NCBI Taxonomy" id="1763"/>
</organismHost>
<proteinExistence type="inferred from homology"/>
<sequence>MPQRASIQQTADFLGVSTKTVRRYIADGRLKAVRLGPRLIRVERDSVEALMRPIGK</sequence>
<dbReference type="EMBL" id="U81553">
    <property type="protein sequence ID" value="AAB69100.1"/>
    <property type="molecule type" value="Genomic_DNA"/>
</dbReference>
<dbReference type="EMBL" id="AF022214">
    <property type="protein sequence ID" value="AAC18477.1"/>
    <property type="molecule type" value="Genomic_DNA"/>
</dbReference>
<dbReference type="PIR" id="B72804">
    <property type="entry name" value="B72804"/>
</dbReference>
<dbReference type="SMR" id="O22001"/>
<dbReference type="KEGG" id="vg:1261564"/>
<dbReference type="OrthoDB" id="24395at10239"/>
<dbReference type="Proteomes" id="UP000002131">
    <property type="component" value="Segment"/>
</dbReference>
<dbReference type="GO" id="GO:0003677">
    <property type="term" value="F:DNA binding"/>
    <property type="evidence" value="ECO:0007669"/>
    <property type="project" value="UniProtKB-KW"/>
</dbReference>
<dbReference type="GO" id="GO:0006310">
    <property type="term" value="P:DNA recombination"/>
    <property type="evidence" value="ECO:0007669"/>
    <property type="project" value="UniProtKB-KW"/>
</dbReference>
<dbReference type="GO" id="GO:0032359">
    <property type="term" value="P:provirus excision"/>
    <property type="evidence" value="ECO:0007669"/>
    <property type="project" value="UniProtKB-KW"/>
</dbReference>
<dbReference type="InterPro" id="IPR009061">
    <property type="entry name" value="DNA-bd_dom_put_sf"/>
</dbReference>
<dbReference type="InterPro" id="IPR041657">
    <property type="entry name" value="HTH_17"/>
</dbReference>
<dbReference type="InterPro" id="IPR010093">
    <property type="entry name" value="SinI_DNA-bd"/>
</dbReference>
<dbReference type="NCBIfam" id="TIGR01764">
    <property type="entry name" value="excise"/>
    <property type="match status" value="1"/>
</dbReference>
<dbReference type="Pfam" id="PF12728">
    <property type="entry name" value="HTH_17"/>
    <property type="match status" value="1"/>
</dbReference>
<dbReference type="SUPFAM" id="SSF46955">
    <property type="entry name" value="Putative DNA-binding domain"/>
    <property type="match status" value="1"/>
</dbReference>
<comment type="function">
    <text evidence="1">Excisionase and integrase are necessary for the excision of prophage from the host genome by site-specific recombination at the att site.</text>
</comment>
<comment type="similarity">
    <text evidence="2">Belongs to the L5likevirus excisionase protein family.</text>
</comment>
<organism>
    <name type="scientific">Mycobacterium phage D29</name>
    <name type="common">Mycobacteriophage D29</name>
    <dbReference type="NCBI Taxonomy" id="28369"/>
    <lineage>
        <taxon>Viruses</taxon>
        <taxon>Duplodnaviria</taxon>
        <taxon>Heunggongvirae</taxon>
        <taxon>Uroviricota</taxon>
        <taxon>Caudoviricetes</taxon>
        <taxon>Fromanvirus</taxon>
    </lineage>
</organism>
<evidence type="ECO:0000250" key="1">
    <source>
        <dbReference type="UniProtKB" id="Q05246"/>
    </source>
</evidence>
<evidence type="ECO:0000305" key="2"/>